<organism>
    <name type="scientific">Gallus gallus</name>
    <name type="common">Chicken</name>
    <dbReference type="NCBI Taxonomy" id="9031"/>
    <lineage>
        <taxon>Eukaryota</taxon>
        <taxon>Metazoa</taxon>
        <taxon>Chordata</taxon>
        <taxon>Craniata</taxon>
        <taxon>Vertebrata</taxon>
        <taxon>Euteleostomi</taxon>
        <taxon>Archelosauria</taxon>
        <taxon>Archosauria</taxon>
        <taxon>Dinosauria</taxon>
        <taxon>Saurischia</taxon>
        <taxon>Theropoda</taxon>
        <taxon>Coelurosauria</taxon>
        <taxon>Aves</taxon>
        <taxon>Neognathae</taxon>
        <taxon>Galloanserae</taxon>
        <taxon>Galliformes</taxon>
        <taxon>Phasianidae</taxon>
        <taxon>Phasianinae</taxon>
        <taxon>Gallus</taxon>
    </lineage>
</organism>
<proteinExistence type="evidence at transcript level"/>
<feature type="chain" id="PRO_0000253639" description="Pleckstrin homology domain-containing family B member 2">
    <location>
        <begin position="1"/>
        <end position="224"/>
    </location>
</feature>
<feature type="domain" description="PH" evidence="2">
    <location>
        <begin position="2"/>
        <end position="109"/>
    </location>
</feature>
<feature type="binding site" evidence="1">
    <location>
        <position position="20"/>
    </location>
    <ligand>
        <name>a 1,2-diacyl-sn-glycero-3-phospho-L-serine</name>
        <dbReference type="ChEBI" id="CHEBI:57262"/>
    </ligand>
</feature>
<gene>
    <name type="primary">PLEKHB2</name>
    <name type="synonym">EVT2</name>
    <name type="ORF">RCJMB04_8b5</name>
</gene>
<reference key="1">
    <citation type="journal article" date="2005" name="Genome Biol.">
        <title>Full-length cDNAs from chicken bursal lymphocytes to facilitate gene function analysis.</title>
        <authorList>
            <person name="Caldwell R.B."/>
            <person name="Kierzek A.M."/>
            <person name="Arakawa H."/>
            <person name="Bezzubov Y."/>
            <person name="Zaim J."/>
            <person name="Fiedler P."/>
            <person name="Kutter S."/>
            <person name="Blagodatski A."/>
            <person name="Kostovska D."/>
            <person name="Koter M."/>
            <person name="Plachy J."/>
            <person name="Carninci P."/>
            <person name="Hayashizaki Y."/>
            <person name="Buerstedde J.-M."/>
        </authorList>
    </citation>
    <scope>NUCLEOTIDE SEQUENCE [LARGE SCALE MRNA]</scope>
    <source>
        <strain>CB</strain>
        <tissue>Bursa of Fabricius</tissue>
    </source>
</reference>
<accession>Q5F3S2</accession>
<comment type="function">
    <text evidence="1">Involved in retrograde transport of recycling endosomes.</text>
</comment>
<comment type="subcellular location">
    <subcellularLocation>
        <location evidence="1">Recycling endosome membrane</location>
        <topology>Peripheral membrane protein</topology>
    </subcellularLocation>
    <text evidence="1">Specifically detected in tubulovesicular structures, and colocalizes with TFNR.</text>
</comment>
<comment type="domain">
    <text evidence="1">The PH domain specifically binds phosphatidylserine, which is enriched in recycling endosome membranes, it doesn't recognize PIPs.</text>
</comment>
<protein>
    <recommendedName>
        <fullName>Pleckstrin homology domain-containing family B member 2</fullName>
        <shortName>PH domain-containing family B member 2</shortName>
    </recommendedName>
    <alternativeName>
        <fullName>Evectin-2</fullName>
    </alternativeName>
</protein>
<evidence type="ECO:0000250" key="1"/>
<evidence type="ECO:0000255" key="2">
    <source>
        <dbReference type="PROSITE-ProRule" id="PRU00145"/>
    </source>
</evidence>
<keyword id="KW-0967">Endosome</keyword>
<keyword id="KW-0472">Membrane</keyword>
<keyword id="KW-1185">Reference proteome</keyword>
<sequence>MAFVKSGWLLRQSTILRRWKKNWFDLWSDGRLIFYDDQNRHDIEDKIHMRIHCINLRVGNECRDFQPPEGKQRDCLLQIVCRDGKTVNLCAESADDCLAWKIALQDARTNTGYVGSDVMYDETAISSAPPPYTAYATPSPEVYGYGYGQYHGAYPTVGPQVFYASNGQAYDVPYQYPYHGPYGQPPANHVIIRERYRDNDGDLALGMLAGAATGMALGSLFWVF</sequence>
<dbReference type="EMBL" id="AJ851578">
    <property type="protein sequence ID" value="CAH65212.1"/>
    <property type="molecule type" value="mRNA"/>
</dbReference>
<dbReference type="RefSeq" id="NP_001026473.1">
    <property type="nucleotide sequence ID" value="NM_001031302.2"/>
</dbReference>
<dbReference type="RefSeq" id="NP_001383093.1">
    <property type="nucleotide sequence ID" value="NM_001396164.1"/>
</dbReference>
<dbReference type="RefSeq" id="NP_001383094.1">
    <property type="nucleotide sequence ID" value="NM_001396165.1"/>
</dbReference>
<dbReference type="RefSeq" id="XP_025009104.2">
    <property type="nucleotide sequence ID" value="XM_025153336.3"/>
</dbReference>
<dbReference type="RefSeq" id="XP_040561456.1">
    <property type="nucleotide sequence ID" value="XM_040705522.2"/>
</dbReference>
<dbReference type="RefSeq" id="XP_046779711.1">
    <property type="nucleotide sequence ID" value="XM_046923755.1"/>
</dbReference>
<dbReference type="RefSeq" id="XP_046779712.1">
    <property type="nucleotide sequence ID" value="XM_046923756.1"/>
</dbReference>
<dbReference type="SMR" id="Q5F3S2"/>
<dbReference type="FunCoup" id="Q5F3S2">
    <property type="interactions" value="911"/>
</dbReference>
<dbReference type="STRING" id="9031.ENSGALP00000070573"/>
<dbReference type="GlyGen" id="Q5F3S2">
    <property type="glycosylation" value="2 sites"/>
</dbReference>
<dbReference type="PaxDb" id="9031-ENSGALP00000040702"/>
<dbReference type="Ensembl" id="ENSGALT00010058974.1">
    <property type="protein sequence ID" value="ENSGALP00010035939.1"/>
    <property type="gene ID" value="ENSGALG00010024174.1"/>
</dbReference>
<dbReference type="GeneID" id="424758"/>
<dbReference type="KEGG" id="gga:424758"/>
<dbReference type="CTD" id="55041"/>
<dbReference type="VEuPathDB" id="HostDB:geneid_424758"/>
<dbReference type="eggNOG" id="ENOG502R270">
    <property type="taxonomic scope" value="Eukaryota"/>
</dbReference>
<dbReference type="GeneTree" id="ENSGT00390000013989"/>
<dbReference type="InParanoid" id="Q5F3S2"/>
<dbReference type="OMA" id="YIGSEVM"/>
<dbReference type="OrthoDB" id="2157866at2759"/>
<dbReference type="PhylomeDB" id="Q5F3S2"/>
<dbReference type="PRO" id="PR:Q5F3S2"/>
<dbReference type="Proteomes" id="UP000000539">
    <property type="component" value="Chromosome 9"/>
</dbReference>
<dbReference type="GO" id="GO:0016020">
    <property type="term" value="C:membrane"/>
    <property type="evidence" value="ECO:0000318"/>
    <property type="project" value="GO_Central"/>
</dbReference>
<dbReference type="GO" id="GO:0055038">
    <property type="term" value="C:recycling endosome membrane"/>
    <property type="evidence" value="ECO:0007669"/>
    <property type="project" value="UniProtKB-SubCell"/>
</dbReference>
<dbReference type="GO" id="GO:0045595">
    <property type="term" value="P:regulation of cell differentiation"/>
    <property type="evidence" value="ECO:0000318"/>
    <property type="project" value="GO_Central"/>
</dbReference>
<dbReference type="CDD" id="cd13265">
    <property type="entry name" value="PH_evt"/>
    <property type="match status" value="1"/>
</dbReference>
<dbReference type="FunFam" id="2.30.29.30:FF:000073">
    <property type="entry name" value="Pleckstrin homology domain-containing family B member 2"/>
    <property type="match status" value="1"/>
</dbReference>
<dbReference type="Gene3D" id="2.30.29.30">
    <property type="entry name" value="Pleckstrin-homology domain (PH domain)/Phosphotyrosine-binding domain (PTB)"/>
    <property type="match status" value="1"/>
</dbReference>
<dbReference type="InterPro" id="IPR011993">
    <property type="entry name" value="PH-like_dom_sf"/>
</dbReference>
<dbReference type="InterPro" id="IPR001849">
    <property type="entry name" value="PH_domain"/>
</dbReference>
<dbReference type="InterPro" id="IPR039680">
    <property type="entry name" value="PLEKHB1/2"/>
</dbReference>
<dbReference type="PANTHER" id="PTHR14309">
    <property type="entry name" value="EXPRESSED PROTEIN"/>
    <property type="match status" value="1"/>
</dbReference>
<dbReference type="PANTHER" id="PTHR14309:SF8">
    <property type="entry name" value="PLECKSTRIN HOMOLOGY DOMAIN-CONTAINING FAMILY B MEMBER 2"/>
    <property type="match status" value="1"/>
</dbReference>
<dbReference type="Pfam" id="PF00169">
    <property type="entry name" value="PH"/>
    <property type="match status" value="1"/>
</dbReference>
<dbReference type="SMART" id="SM00233">
    <property type="entry name" value="PH"/>
    <property type="match status" value="1"/>
</dbReference>
<dbReference type="SUPFAM" id="SSF50729">
    <property type="entry name" value="PH domain-like"/>
    <property type="match status" value="1"/>
</dbReference>
<dbReference type="PROSITE" id="PS50003">
    <property type="entry name" value="PH_DOMAIN"/>
    <property type="match status" value="1"/>
</dbReference>
<name>PKHB2_CHICK</name>